<comment type="similarity">
    <text evidence="3">Belongs to the bacterial ribosomal protein bL32 family.</text>
</comment>
<accession>O34101</accession>
<gene>
    <name type="primary">rpmF</name>
</gene>
<keyword id="KW-0687">Ribonucleoprotein</keyword>
<keyword id="KW-0689">Ribosomal protein</keyword>
<proteinExistence type="inferred from homology"/>
<dbReference type="EMBL" id="U89998">
    <property type="protein sequence ID" value="AAB66691.1"/>
    <property type="molecule type" value="Genomic_DNA"/>
</dbReference>
<dbReference type="SMR" id="O34101"/>
<dbReference type="GO" id="GO:0015934">
    <property type="term" value="C:large ribosomal subunit"/>
    <property type="evidence" value="ECO:0007669"/>
    <property type="project" value="InterPro"/>
</dbReference>
<dbReference type="GO" id="GO:0003735">
    <property type="term" value="F:structural constituent of ribosome"/>
    <property type="evidence" value="ECO:0007669"/>
    <property type="project" value="InterPro"/>
</dbReference>
<dbReference type="GO" id="GO:0006412">
    <property type="term" value="P:translation"/>
    <property type="evidence" value="ECO:0007669"/>
    <property type="project" value="UniProtKB-UniRule"/>
</dbReference>
<dbReference type="HAMAP" id="MF_00340">
    <property type="entry name" value="Ribosomal_bL32"/>
    <property type="match status" value="1"/>
</dbReference>
<dbReference type="InterPro" id="IPR002677">
    <property type="entry name" value="Ribosomal_bL32"/>
</dbReference>
<dbReference type="InterPro" id="IPR044957">
    <property type="entry name" value="Ribosomal_bL32_bact"/>
</dbReference>
<dbReference type="InterPro" id="IPR011332">
    <property type="entry name" value="Ribosomal_zn-bd"/>
</dbReference>
<dbReference type="NCBIfam" id="TIGR01031">
    <property type="entry name" value="rpmF_bact"/>
    <property type="match status" value="1"/>
</dbReference>
<dbReference type="PANTHER" id="PTHR35534">
    <property type="entry name" value="50S RIBOSOMAL PROTEIN L32"/>
    <property type="match status" value="1"/>
</dbReference>
<dbReference type="PANTHER" id="PTHR35534:SF1">
    <property type="entry name" value="LARGE RIBOSOMAL SUBUNIT PROTEIN BL32"/>
    <property type="match status" value="1"/>
</dbReference>
<dbReference type="Pfam" id="PF01783">
    <property type="entry name" value="Ribosomal_L32p"/>
    <property type="match status" value="1"/>
</dbReference>
<dbReference type="SUPFAM" id="SSF57829">
    <property type="entry name" value="Zn-binding ribosomal proteins"/>
    <property type="match status" value="1"/>
</dbReference>
<reference key="1">
    <citation type="journal article" date="1997" name="Microbiology">
        <title>Molecular characterization of the restriction endonuclease gene (scrFIR) associated with the ScrFI restriction/modification system from Lactococcus lactis subsp. cremoris UC503.</title>
        <authorList>
            <person name="Twomey D.P."/>
            <person name="Gabillet N."/>
            <person name="Daly C."/>
            <person name="Fitzgerald G.F."/>
        </authorList>
    </citation>
    <scope>NUCLEOTIDE SEQUENCE [GENOMIC DNA]</scope>
    <source>
        <strain>UC503</strain>
    </source>
</reference>
<name>RL32_LACLC</name>
<evidence type="ECO:0000250" key="1"/>
<evidence type="ECO:0000256" key="2">
    <source>
        <dbReference type="SAM" id="MobiDB-lite"/>
    </source>
</evidence>
<evidence type="ECO:0000305" key="3"/>
<protein>
    <recommendedName>
        <fullName evidence="3">Large ribosomal subunit protein bL32</fullName>
    </recommendedName>
    <alternativeName>
        <fullName>50S ribosomal protein L32</fullName>
    </alternativeName>
</protein>
<feature type="initiator methionine" description="Removed" evidence="1">
    <location>
        <position position="1"/>
    </location>
</feature>
<feature type="chain" id="PRO_0000172352" description="Large ribosomal subunit protein bL32">
    <location>
        <begin position="2"/>
        <end position="58"/>
    </location>
</feature>
<feature type="region of interest" description="Disordered" evidence="2">
    <location>
        <begin position="1"/>
        <end position="23"/>
    </location>
</feature>
<feature type="compositionally biased region" description="Basic residues" evidence="2">
    <location>
        <begin position="9"/>
        <end position="20"/>
    </location>
</feature>
<sequence length="58" mass="6778">MAVPARHTSSAKKNRRRTHYKLTAPTVTFDETTGDYRHSHRVSLKGYYKGRKVRDDTK</sequence>
<organism>
    <name type="scientific">Lactococcus lactis subsp. cremoris</name>
    <name type="common">Streptococcus cremoris</name>
    <dbReference type="NCBI Taxonomy" id="1359"/>
    <lineage>
        <taxon>Bacteria</taxon>
        <taxon>Bacillati</taxon>
        <taxon>Bacillota</taxon>
        <taxon>Bacilli</taxon>
        <taxon>Lactobacillales</taxon>
        <taxon>Streptococcaceae</taxon>
        <taxon>Lactococcus</taxon>
    </lineage>
</organism>